<proteinExistence type="evidence at protein level"/>
<sequence length="664" mass="76177">MMTEKSNGVKSSPANNHNHHPPPSIKANGKDDHRAGSRPQSVAADDDTSPELQRLAEMDTPRRGRGGFQRIVRLVGVIRDWANKNFREEEPRPDSFLERFRGPELQTVTTHQGDDKGGKDGEGKGTKKKFELFVLDPAGDWYYRWLFVIAMPVLYNWCLLVARACFSDLQRNYFVVWLVLDYFSDTVYIADLIIRLRTGFLEQGLLVKDPKKLRDNYIHTLQFKLDVASIIPTDLIYFAVGIHSPEVRFNRLLHFARMFEFFDRTETRTSYPNIFRISNLVLYILVIIHWNACIYYVISKSIGFGVDTWVYPNITDPEYGYLAREYIYCLYWSTLTLTTIGETPPPVKDEEYLFVIFDFLIGVLIFATIVGNVGSMISNMNATRAEFQAKIDAVKHYMQFRKVSKDMEAKVIKWFDYLWTNKKTVDEREVLKNLPAKLRAEIAINVHLSTLKKVRIFQDCEAGLLVELVLKLRPQVFSPGDYICRKGDIGKEMYIIKEGKLAVVADDGVTQYALLSAGSCFGEISILNIKGSKMGNRRTANIRSLGYSDLFCLSKDDLMEAVTEYPDAKKVLEERGREILMKEGLLDENEVAASMEVDVQEKLEQLETNMDTLYTRFARLLAEYTGAQQKLKQRITVLETKMKQNHEDDYLSDGINTPEPTAAE</sequence>
<gene>
    <name evidence="13 16" type="primary">Cnga2</name>
    <name type="synonym">Cncg2</name>
</gene>
<accession>Q00195</accession>
<accession>Q549G7</accession>
<organism>
    <name type="scientific">Rattus norvegicus</name>
    <name type="common">Rat</name>
    <dbReference type="NCBI Taxonomy" id="10116"/>
    <lineage>
        <taxon>Eukaryota</taxon>
        <taxon>Metazoa</taxon>
        <taxon>Chordata</taxon>
        <taxon>Craniata</taxon>
        <taxon>Vertebrata</taxon>
        <taxon>Euteleostomi</taxon>
        <taxon>Mammalia</taxon>
        <taxon>Eutheria</taxon>
        <taxon>Euarchontoglires</taxon>
        <taxon>Glires</taxon>
        <taxon>Rodentia</taxon>
        <taxon>Myomorpha</taxon>
        <taxon>Muroidea</taxon>
        <taxon>Muridae</taxon>
        <taxon>Murinae</taxon>
        <taxon>Rattus</taxon>
    </lineage>
</organism>
<dbReference type="EMBL" id="X55519">
    <property type="protein sequence ID" value="CAA39135.1"/>
    <property type="molecule type" value="mRNA"/>
</dbReference>
<dbReference type="EMBL" id="AF126808">
    <property type="protein sequence ID" value="AAD41473.1"/>
    <property type="molecule type" value="mRNA"/>
</dbReference>
<dbReference type="PIR" id="S11517">
    <property type="entry name" value="S11517"/>
</dbReference>
<dbReference type="RefSeq" id="NP_037060.1">
    <property type="nucleotide sequence ID" value="NM_012928.1"/>
</dbReference>
<dbReference type="RefSeq" id="XP_017455916.1">
    <property type="nucleotide sequence ID" value="XM_017600427.1"/>
</dbReference>
<dbReference type="PDB" id="2M0J">
    <property type="method" value="NMR"/>
    <property type="chains" value="B=60-87"/>
</dbReference>
<dbReference type="PDB" id="2M0K">
    <property type="method" value="NMR"/>
    <property type="chains" value="B=60-87"/>
</dbReference>
<dbReference type="PDBsum" id="2M0J"/>
<dbReference type="PDBsum" id="2M0K"/>
<dbReference type="BMRB" id="Q00195"/>
<dbReference type="SMR" id="Q00195"/>
<dbReference type="DIP" id="DIP-61291N"/>
<dbReference type="FunCoup" id="Q00195">
    <property type="interactions" value="1008"/>
</dbReference>
<dbReference type="IntAct" id="Q00195">
    <property type="interactions" value="1"/>
</dbReference>
<dbReference type="STRING" id="10116.ENSRNOP00000016415"/>
<dbReference type="BindingDB" id="Q00195"/>
<dbReference type="ChEMBL" id="CHEMBL4523272"/>
<dbReference type="GuidetoPHARMACOLOGY" id="395"/>
<dbReference type="GlyCosmos" id="Q00195">
    <property type="glycosylation" value="1 site, No reported glycans"/>
</dbReference>
<dbReference type="iPTMnet" id="Q00195"/>
<dbReference type="PhosphoSitePlus" id="Q00195"/>
<dbReference type="PaxDb" id="10116-ENSRNOP00000016415"/>
<dbReference type="GeneID" id="25411"/>
<dbReference type="KEGG" id="rno:25411"/>
<dbReference type="AGR" id="RGD:2367"/>
<dbReference type="CTD" id="1260"/>
<dbReference type="RGD" id="2367">
    <property type="gene designation" value="Cnga2"/>
</dbReference>
<dbReference type="eggNOG" id="KOG0500">
    <property type="taxonomic scope" value="Eukaryota"/>
</dbReference>
<dbReference type="InParanoid" id="Q00195"/>
<dbReference type="PhylomeDB" id="Q00195"/>
<dbReference type="Reactome" id="R-RNO-5620916">
    <property type="pathway name" value="VxPx cargo-targeting to cilium"/>
</dbReference>
<dbReference type="PRO" id="PR:Q00195"/>
<dbReference type="Proteomes" id="UP000002494">
    <property type="component" value="Unplaced"/>
</dbReference>
<dbReference type="GO" id="GO:0060170">
    <property type="term" value="C:ciliary membrane"/>
    <property type="evidence" value="ECO:0000266"/>
    <property type="project" value="RGD"/>
</dbReference>
<dbReference type="GO" id="GO:0017071">
    <property type="term" value="C:intracellular cyclic nucleotide activated cation channel complex"/>
    <property type="evidence" value="ECO:0000314"/>
    <property type="project" value="RGD"/>
</dbReference>
<dbReference type="GO" id="GO:0098804">
    <property type="term" value="C:non-motile cilium membrane"/>
    <property type="evidence" value="ECO:0000314"/>
    <property type="project" value="UniProtKB"/>
</dbReference>
<dbReference type="GO" id="GO:0043204">
    <property type="term" value="C:perikaryon"/>
    <property type="evidence" value="ECO:0000314"/>
    <property type="project" value="RGD"/>
</dbReference>
<dbReference type="GO" id="GO:0005886">
    <property type="term" value="C:plasma membrane"/>
    <property type="evidence" value="ECO:0000314"/>
    <property type="project" value="RGD"/>
</dbReference>
<dbReference type="GO" id="GO:0005262">
    <property type="term" value="F:calcium channel activity"/>
    <property type="evidence" value="ECO:0007669"/>
    <property type="project" value="UniProtKB-KW"/>
</dbReference>
<dbReference type="GO" id="GO:0005516">
    <property type="term" value="F:calmodulin binding"/>
    <property type="evidence" value="ECO:0007669"/>
    <property type="project" value="UniProtKB-KW"/>
</dbReference>
<dbReference type="GO" id="GO:0030552">
    <property type="term" value="F:cAMP binding"/>
    <property type="evidence" value="ECO:0007669"/>
    <property type="project" value="UniProtKB-KW"/>
</dbReference>
<dbReference type="GO" id="GO:0030553">
    <property type="term" value="F:cGMP binding"/>
    <property type="evidence" value="ECO:0000314"/>
    <property type="project" value="RGD"/>
</dbReference>
<dbReference type="GO" id="GO:0042802">
    <property type="term" value="F:identical protein binding"/>
    <property type="evidence" value="ECO:0000353"/>
    <property type="project" value="RGD"/>
</dbReference>
<dbReference type="GO" id="GO:0005222">
    <property type="term" value="F:intracellularly cAMP-activated cation channel activity"/>
    <property type="evidence" value="ECO:0000314"/>
    <property type="project" value="UniProtKB"/>
</dbReference>
<dbReference type="GO" id="GO:0005223">
    <property type="term" value="F:intracellularly cGMP-activated cation channel activity"/>
    <property type="evidence" value="ECO:0000314"/>
    <property type="project" value="UniProtKB"/>
</dbReference>
<dbReference type="GO" id="GO:0005216">
    <property type="term" value="F:monoatomic ion channel activity"/>
    <property type="evidence" value="ECO:0000266"/>
    <property type="project" value="RGD"/>
</dbReference>
<dbReference type="GO" id="GO:0044877">
    <property type="term" value="F:protein-containing complex binding"/>
    <property type="evidence" value="ECO:0000314"/>
    <property type="project" value="RGD"/>
</dbReference>
<dbReference type="GO" id="GO:0005249">
    <property type="term" value="F:voltage-gated potassium channel activity"/>
    <property type="evidence" value="ECO:0007669"/>
    <property type="project" value="InterPro"/>
</dbReference>
<dbReference type="GO" id="GO:0006816">
    <property type="term" value="P:calcium ion transport"/>
    <property type="evidence" value="ECO:0000314"/>
    <property type="project" value="UniProtKB"/>
</dbReference>
<dbReference type="GO" id="GO:0051899">
    <property type="term" value="P:membrane depolarization"/>
    <property type="evidence" value="ECO:0000314"/>
    <property type="project" value="UniProtKB"/>
</dbReference>
<dbReference type="GO" id="GO:0098655">
    <property type="term" value="P:monoatomic cation transmembrane transport"/>
    <property type="evidence" value="ECO:0000318"/>
    <property type="project" value="GO_Central"/>
</dbReference>
<dbReference type="GO" id="GO:0006813">
    <property type="term" value="P:potassium ion transport"/>
    <property type="evidence" value="ECO:0000314"/>
    <property type="project" value="UniProtKB"/>
</dbReference>
<dbReference type="GO" id="GO:0007608">
    <property type="term" value="P:sensory perception of smell"/>
    <property type="evidence" value="ECO:0000266"/>
    <property type="project" value="RGD"/>
</dbReference>
<dbReference type="GO" id="GO:0006814">
    <property type="term" value="P:sodium ion transport"/>
    <property type="evidence" value="ECO:0000314"/>
    <property type="project" value="UniProtKB"/>
</dbReference>
<dbReference type="CDD" id="cd00038">
    <property type="entry name" value="CAP_ED"/>
    <property type="match status" value="1"/>
</dbReference>
<dbReference type="FunFam" id="2.60.120.10:FF:000002">
    <property type="entry name" value="Cyclic nucleotide gated channel alpha 1a"/>
    <property type="match status" value="1"/>
</dbReference>
<dbReference type="FunFam" id="1.10.287.630:FF:000001">
    <property type="entry name" value="Cyclic nucleotide-gated channel alpha 3"/>
    <property type="match status" value="1"/>
</dbReference>
<dbReference type="FunFam" id="1.10.287.70:FF:000030">
    <property type="entry name" value="Cyclic nucleotide-gated channel alpha 3"/>
    <property type="match status" value="1"/>
</dbReference>
<dbReference type="FunFam" id="1.20.5.300:FF:000002">
    <property type="entry name" value="Cyclic nucleotide-gated channel alpha 3"/>
    <property type="match status" value="1"/>
</dbReference>
<dbReference type="Gene3D" id="1.10.287.70">
    <property type="match status" value="1"/>
</dbReference>
<dbReference type="Gene3D" id="1.20.5.300">
    <property type="match status" value="1"/>
</dbReference>
<dbReference type="Gene3D" id="1.10.287.630">
    <property type="entry name" value="Helix hairpin bin"/>
    <property type="match status" value="1"/>
</dbReference>
<dbReference type="Gene3D" id="2.60.120.10">
    <property type="entry name" value="Jelly Rolls"/>
    <property type="match status" value="1"/>
</dbReference>
<dbReference type="InterPro" id="IPR032406">
    <property type="entry name" value="CLZ_dom"/>
</dbReference>
<dbReference type="InterPro" id="IPR050866">
    <property type="entry name" value="CNG_cation_channel"/>
</dbReference>
<dbReference type="InterPro" id="IPR018488">
    <property type="entry name" value="cNMP-bd_CS"/>
</dbReference>
<dbReference type="InterPro" id="IPR000595">
    <property type="entry name" value="cNMP-bd_dom"/>
</dbReference>
<dbReference type="InterPro" id="IPR018490">
    <property type="entry name" value="cNMP-bd_dom_sf"/>
</dbReference>
<dbReference type="InterPro" id="IPR005821">
    <property type="entry name" value="Ion_trans_dom"/>
</dbReference>
<dbReference type="InterPro" id="IPR003938">
    <property type="entry name" value="K_chnl_volt-dep_EAG/ELK/ERG"/>
</dbReference>
<dbReference type="InterPro" id="IPR014710">
    <property type="entry name" value="RmlC-like_jellyroll"/>
</dbReference>
<dbReference type="PANTHER" id="PTHR45638">
    <property type="entry name" value="CYCLIC NUCLEOTIDE-GATED CATION CHANNEL SUBUNIT A"/>
    <property type="match status" value="1"/>
</dbReference>
<dbReference type="PANTHER" id="PTHR45638:SF3">
    <property type="entry name" value="CYCLIC NUCLEOTIDE-GATED OLFACTORY CHANNEL"/>
    <property type="match status" value="1"/>
</dbReference>
<dbReference type="Pfam" id="PF16526">
    <property type="entry name" value="CLZ"/>
    <property type="match status" value="1"/>
</dbReference>
<dbReference type="Pfam" id="PF00027">
    <property type="entry name" value="cNMP_binding"/>
    <property type="match status" value="1"/>
</dbReference>
<dbReference type="Pfam" id="PF00520">
    <property type="entry name" value="Ion_trans"/>
    <property type="match status" value="1"/>
</dbReference>
<dbReference type="PRINTS" id="PR01463">
    <property type="entry name" value="EAGCHANLFMLY"/>
</dbReference>
<dbReference type="SMART" id="SM00100">
    <property type="entry name" value="cNMP"/>
    <property type="match status" value="1"/>
</dbReference>
<dbReference type="SUPFAM" id="SSF51206">
    <property type="entry name" value="cAMP-binding domain-like"/>
    <property type="match status" value="1"/>
</dbReference>
<dbReference type="SUPFAM" id="SSF81324">
    <property type="entry name" value="Voltage-gated potassium channels"/>
    <property type="match status" value="1"/>
</dbReference>
<dbReference type="PROSITE" id="PS00888">
    <property type="entry name" value="CNMP_BINDING_1"/>
    <property type="match status" value="1"/>
</dbReference>
<dbReference type="PROSITE" id="PS00889">
    <property type="entry name" value="CNMP_BINDING_2"/>
    <property type="match status" value="1"/>
</dbReference>
<dbReference type="PROSITE" id="PS50042">
    <property type="entry name" value="CNMP_BINDING_3"/>
    <property type="match status" value="1"/>
</dbReference>
<reference key="1">
    <citation type="journal article" date="1990" name="Nature">
        <title>Primary structure and functional expression of a cyclic nucleotide-activated channel from olfactory neurons.</title>
        <authorList>
            <person name="Dhallan R.S."/>
            <person name="Yau K.-W."/>
            <person name="Schrader K.A."/>
            <person name="Reed R.R."/>
        </authorList>
    </citation>
    <scope>NUCLEOTIDE SEQUENCE [MRNA]</scope>
    <scope>FUNCTION</scope>
    <scope>TRANSPORTER ACTIVITY</scope>
    <scope>ACTIVITY REGULATION</scope>
    <scope>TISSUE SPECIFICITY</scope>
    <source>
        <tissue>Olfactory sensory neuron</tissue>
    </source>
</reference>
<reference key="2">
    <citation type="journal article" date="1999" name="Eur. J. Neurosci.">
        <title>Molecular characterization and in situ localization of a full-length cyclic nucleotide-gated channel in rat brain.</title>
        <authorList>
            <person name="Strijbos P.J."/>
            <person name="Pratt G.D."/>
            <person name="Khan S."/>
            <person name="Charles I.G."/>
            <person name="Garthwaite J."/>
        </authorList>
    </citation>
    <scope>NUCLEOTIDE SEQUENCE [MRNA]</scope>
    <scope>TISSUE SPECIFICITY</scope>
    <source>
        <tissue>Brain</tissue>
    </source>
</reference>
<reference key="3">
    <citation type="journal article" date="1994" name="Proc. Natl. Acad. Sci. U.S.A.">
        <title>Heteromeric olfactory cyclic nucleotide-gated channels: a subunit that confers increased sensitivity to cAMP.</title>
        <authorList>
            <person name="Bradley J."/>
            <person name="Li J."/>
            <person name="Davidson N."/>
            <person name="Lester H.A."/>
            <person name="Zinn K."/>
        </authorList>
    </citation>
    <scope>FUNCTION</scope>
    <source>
        <strain>Sprague-Dawley</strain>
    </source>
</reference>
<reference key="4">
    <citation type="journal article" date="1999" name="EMBO J.">
        <title>Ca2+ permeation in cyclic nucleotide-gated channels.</title>
        <authorList>
            <person name="Dzeja C."/>
            <person name="Hagen V."/>
            <person name="Kaupp U.B."/>
            <person name="Frings S."/>
        </authorList>
    </citation>
    <scope>FUNCTION</scope>
    <scope>TRANSPORTER ACTIVITY</scope>
</reference>
<reference key="5">
    <citation type="journal article" date="1999" name="J. Neurosci.">
        <title>The native rat olfactory cyclic nucleotide-gated channel is composed of three distinct subunits.</title>
        <authorList>
            <person name="Boenigk W."/>
            <person name="Bradley J."/>
            <person name="Mueller F."/>
            <person name="Sesti F."/>
            <person name="Boekhoff I."/>
            <person name="Ronnett G.V."/>
            <person name="Kaupp U.B."/>
            <person name="Frings S."/>
        </authorList>
    </citation>
    <scope>FUNCTION</scope>
    <scope>TRANSPORTER ACTIVITY</scope>
</reference>
<reference key="6">
    <citation type="journal article" date="2001" name="Science">
        <title>Nomenclature for ion channel subunits.</title>
        <authorList>
            <person name="Bradley J."/>
            <person name="Frings S."/>
            <person name="Yau K.W."/>
            <person name="Reed R."/>
        </authorList>
    </citation>
    <scope>NOMENCLATURE</scope>
</reference>
<reference key="7">
    <citation type="journal article" date="2016" name="Sci. Rep.">
        <title>Deciphering the function of the CNGB1b subunit in olfactory CNG channels.</title>
        <authorList>
            <person name="Nache V."/>
            <person name="Wongsamitkul N."/>
            <person name="Kusch J."/>
            <person name="Zimmer T."/>
            <person name="Schwede F."/>
            <person name="Benndorf K."/>
        </authorList>
    </citation>
    <scope>FUNCTION</scope>
    <scope>SUBUNIT</scope>
    <scope>MUTAGENESIS OF ARG-538 AND THR-539</scope>
</reference>
<name>CNGA2_RAT</name>
<protein>
    <recommendedName>
        <fullName>Cyclic nucleotide-gated channel alpha-2</fullName>
        <shortName>CNG channel alpha-2</shortName>
        <shortName>CNG-2</shortName>
        <shortName evidence="13">CNG2</shortName>
    </recommendedName>
    <alternativeName>
        <fullName>Cyclic nucleotide-gated channel alpha 3</fullName>
        <shortName evidence="12">CNCalpha3</shortName>
    </alternativeName>
    <alternativeName>
        <fullName evidence="14">Olfactory cyclic nucleotide-gated channel subunit 1</fullName>
        <shortName evidence="13 14">OCNC1</shortName>
    </alternativeName>
</protein>
<evidence type="ECO:0000250" key="1"/>
<evidence type="ECO:0000250" key="2">
    <source>
        <dbReference type="UniProtKB" id="P29973"/>
    </source>
</evidence>
<evidence type="ECO:0000250" key="3">
    <source>
        <dbReference type="UniProtKB" id="Q00194"/>
    </source>
</evidence>
<evidence type="ECO:0000255" key="4"/>
<evidence type="ECO:0000256" key="5">
    <source>
        <dbReference type="SAM" id="MobiDB-lite"/>
    </source>
</evidence>
<evidence type="ECO:0000269" key="6">
    <source>
    </source>
</evidence>
<evidence type="ECO:0000269" key="7">
    <source>
    </source>
</evidence>
<evidence type="ECO:0000269" key="8">
    <source>
    </source>
</evidence>
<evidence type="ECO:0000269" key="9">
    <source>
    </source>
</evidence>
<evidence type="ECO:0000269" key="10">
    <source>
    </source>
</evidence>
<evidence type="ECO:0000269" key="11">
    <source>
    </source>
</evidence>
<evidence type="ECO:0000303" key="12">
    <source>
    </source>
</evidence>
<evidence type="ECO:0000303" key="13">
    <source>
    </source>
</evidence>
<evidence type="ECO:0000303" key="14">
    <source>
    </source>
</evidence>
<evidence type="ECO:0000305" key="15"/>
<evidence type="ECO:0000312" key="16">
    <source>
        <dbReference type="RGD" id="2367"/>
    </source>
</evidence>
<evidence type="ECO:0007829" key="17">
    <source>
        <dbReference type="PDB" id="2M0J"/>
    </source>
</evidence>
<evidence type="ECO:0007829" key="18">
    <source>
        <dbReference type="PDB" id="2M0K"/>
    </source>
</evidence>
<feature type="chain" id="PRO_0000219315" description="Cyclic nucleotide-gated channel alpha-2">
    <location>
        <begin position="1"/>
        <end position="664"/>
    </location>
</feature>
<feature type="topological domain" description="Cytoplasmic" evidence="15">
    <location>
        <begin position="1"/>
        <end position="146"/>
    </location>
</feature>
<feature type="transmembrane region" description="Helical; Name=S1" evidence="2">
    <location>
        <begin position="147"/>
        <end position="168"/>
    </location>
</feature>
<feature type="topological domain" description="Extracellular" evidence="15">
    <location>
        <begin position="169"/>
        <end position="178"/>
    </location>
</feature>
<feature type="transmembrane region" description="Helical; Name=S2" evidence="2">
    <location>
        <begin position="179"/>
        <end position="199"/>
    </location>
</feature>
<feature type="topological domain" description="Cytoplasmic" evidence="15">
    <location>
        <begin position="200"/>
        <end position="224"/>
    </location>
</feature>
<feature type="transmembrane region" description="Helical; Name=S3" evidence="2">
    <location>
        <begin position="225"/>
        <end position="243"/>
    </location>
</feature>
<feature type="topological domain" description="Extracellular" evidence="15">
    <location>
        <begin position="244"/>
        <end position="248"/>
    </location>
</feature>
<feature type="transmembrane region" description="Helical; Name=S4" evidence="2">
    <location>
        <begin position="249"/>
        <end position="267"/>
    </location>
</feature>
<feature type="topological domain" description="Cytoplasmic" evidence="15">
    <location>
        <begin position="268"/>
        <end position="274"/>
    </location>
</feature>
<feature type="transmembrane region" description="Helical; Name=S5" evidence="2">
    <location>
        <begin position="275"/>
        <end position="298"/>
    </location>
</feature>
<feature type="topological domain" description="Extracellular" evidence="15">
    <location>
        <begin position="299"/>
        <end position="321"/>
    </location>
</feature>
<feature type="transmembrane region" description="Helical; Name=P-helix" evidence="2">
    <location>
        <begin position="322"/>
        <end position="356"/>
    </location>
</feature>
<feature type="transmembrane region" description="Helical; Name=S6" evidence="2">
    <location>
        <begin position="357"/>
        <end position="381"/>
    </location>
</feature>
<feature type="topological domain" description="Cytoplasmic" evidence="15">
    <location>
        <begin position="382"/>
        <end position="664"/>
    </location>
</feature>
<feature type="region of interest" description="Disordered" evidence="5">
    <location>
        <begin position="1"/>
        <end position="51"/>
    </location>
</feature>
<feature type="region of interest" description="Ion conduction pathway" evidence="2">
    <location>
        <begin position="272"/>
        <end position="380"/>
    </location>
</feature>
<feature type="region of interest" description="Selectivity filter" evidence="2">
    <location>
        <begin position="339"/>
        <end position="342"/>
    </location>
</feature>
<feature type="region of interest" description="C-linker" evidence="2">
    <location>
        <begin position="382"/>
        <end position="458"/>
    </location>
</feature>
<feature type="region of interest" description="Cyclic nucleotide-binding domain" evidence="2">
    <location>
        <begin position="462"/>
        <end position="582"/>
    </location>
</feature>
<feature type="coiled-coil region" evidence="2">
    <location>
        <begin position="599"/>
        <end position="653"/>
    </location>
</feature>
<feature type="compositionally biased region" description="Polar residues" evidence="5">
    <location>
        <begin position="1"/>
        <end position="10"/>
    </location>
</feature>
<feature type="binding site" evidence="2">
    <location>
        <position position="522"/>
    </location>
    <ligand>
        <name>3',5'-cyclic GMP</name>
        <dbReference type="ChEBI" id="CHEBI:57746"/>
    </ligand>
</feature>
<feature type="binding site" evidence="2">
    <location>
        <position position="525"/>
    </location>
    <ligand>
        <name>3',5'-cyclic GMP</name>
        <dbReference type="ChEBI" id="CHEBI:57746"/>
    </ligand>
</feature>
<feature type="binding site" evidence="2">
    <location>
        <position position="538"/>
    </location>
    <ligand>
        <name>3',5'-cyclic AMP</name>
        <dbReference type="ChEBI" id="CHEBI:58165"/>
    </ligand>
</feature>
<feature type="binding site" evidence="2">
    <location>
        <position position="538"/>
    </location>
    <ligand>
        <name>3',5'-cyclic GMP</name>
        <dbReference type="ChEBI" id="CHEBI:57746"/>
    </ligand>
</feature>
<feature type="binding site" evidence="2">
    <location>
        <position position="539"/>
    </location>
    <ligand>
        <name>3',5'-cyclic AMP</name>
        <dbReference type="ChEBI" id="CHEBI:58165"/>
    </ligand>
</feature>
<feature type="binding site" evidence="2">
    <location>
        <position position="539"/>
    </location>
    <ligand>
        <name>3',5'-cyclic GMP</name>
        <dbReference type="ChEBI" id="CHEBI:57746"/>
    </ligand>
</feature>
<feature type="site" description="Central gate" evidence="2">
    <location>
        <position position="366"/>
    </location>
</feature>
<feature type="site" description="Central gate" evidence="2">
    <location>
        <position position="370"/>
    </location>
</feature>
<feature type="sequence variant">
    <original>K</original>
    <variation>R</variation>
    <location>
        <position position="212"/>
    </location>
</feature>
<feature type="mutagenesis site" description="Markedly decreases the affinity of the channel for cGMP." evidence="9">
    <original>R</original>
    <variation>E</variation>
    <location>
        <position position="538"/>
    </location>
</feature>
<feature type="mutagenesis site" description="Slightly decreases the affinity of the channel for cGMP." evidence="9">
    <original>T</original>
    <variation>M</variation>
    <location>
        <position position="539"/>
    </location>
</feature>
<feature type="strand" evidence="18">
    <location>
        <begin position="62"/>
        <end position="64"/>
    </location>
</feature>
<feature type="helix" evidence="17">
    <location>
        <begin position="66"/>
        <end position="82"/>
    </location>
</feature>
<feature type="turn" evidence="18">
    <location>
        <begin position="83"/>
        <end position="85"/>
    </location>
</feature>
<keyword id="KW-0002">3D-structure</keyword>
<keyword id="KW-0106">Calcium</keyword>
<keyword id="KW-0107">Calcium channel</keyword>
<keyword id="KW-0109">Calcium transport</keyword>
<keyword id="KW-0112">Calmodulin-binding</keyword>
<keyword id="KW-0114">cAMP</keyword>
<keyword id="KW-0116">cAMP-binding</keyword>
<keyword id="KW-1003">Cell membrane</keyword>
<keyword id="KW-0966">Cell projection</keyword>
<keyword id="KW-0140">cGMP</keyword>
<keyword id="KW-0142">cGMP-binding</keyword>
<keyword id="KW-0175">Coiled coil</keyword>
<keyword id="KW-0407">Ion channel</keyword>
<keyword id="KW-0406">Ion transport</keyword>
<keyword id="KW-1071">Ligand-gated ion channel</keyword>
<keyword id="KW-0472">Membrane</keyword>
<keyword id="KW-0547">Nucleotide-binding</keyword>
<keyword id="KW-0552">Olfaction</keyword>
<keyword id="KW-1185">Reference proteome</keyword>
<keyword id="KW-0716">Sensory transduction</keyword>
<keyword id="KW-0812">Transmembrane</keyword>
<keyword id="KW-1133">Transmembrane helix</keyword>
<keyword id="KW-0813">Transport</keyword>
<comment type="function">
    <text evidence="6 8 9 10 11">Pore-forming subunit of the olfactory cyclic nucleotide-gated channel. Operates in the cilia of olfactory sensory neurons where chemical stimulation of the odorant is converted to an electrical signal. Mediates odorant-induced cAMP-dependent Ca(2+) influx triggering neuron depolarization. The rise of intracellular Ca(2+) levels potentiates the olfactory response by activating Ca(2+)-dependent Cl(-) channels, but it also serves as a negative feedback signal to desensitize the channel for rapid adaptation to odorants. Conducts cAMP- and cGMP-gated ion currents, with permeability for monovalent and divalent cations.</text>
</comment>
<comment type="catalytic activity">
    <reaction evidence="11">
        <text>Ca(2+)(in) = Ca(2+)(out)</text>
        <dbReference type="Rhea" id="RHEA:29671"/>
        <dbReference type="ChEBI" id="CHEBI:29108"/>
    </reaction>
</comment>
<comment type="catalytic activity">
    <reaction evidence="6 8">
        <text>Na(+)(in) = Na(+)(out)</text>
        <dbReference type="Rhea" id="RHEA:34963"/>
        <dbReference type="ChEBI" id="CHEBI:29101"/>
    </reaction>
</comment>
<comment type="catalytic activity">
    <reaction evidence="6 8">
        <text>K(+)(in) = K(+)(out)</text>
        <dbReference type="Rhea" id="RHEA:29463"/>
        <dbReference type="ChEBI" id="CHEBI:29103"/>
    </reaction>
</comment>
<comment type="catalytic activity">
    <reaction evidence="3">
        <text>NH4(+)(in) = NH4(+)(out)</text>
        <dbReference type="Rhea" id="RHEA:28747"/>
        <dbReference type="ChEBI" id="CHEBI:28938"/>
    </reaction>
</comment>
<comment type="catalytic activity">
    <reaction evidence="3">
        <text>Rb(+)(in) = Rb(+)(out)</text>
        <dbReference type="Rhea" id="RHEA:78547"/>
        <dbReference type="ChEBI" id="CHEBI:49847"/>
    </reaction>
</comment>
<comment type="catalytic activity">
    <reaction evidence="3">
        <text>Li(+)(in) = Li(+)(out)</text>
        <dbReference type="Rhea" id="RHEA:78551"/>
        <dbReference type="ChEBI" id="CHEBI:49713"/>
    </reaction>
</comment>
<comment type="catalytic activity">
    <reaction evidence="3">
        <text>Cs(+)(in) = Cs(+)(out)</text>
        <dbReference type="Rhea" id="RHEA:78555"/>
        <dbReference type="ChEBI" id="CHEBI:49547"/>
    </reaction>
</comment>
<comment type="activity regulation">
    <text evidence="8">The channel activity is inhibited by L-cis diltiazem.</text>
</comment>
<comment type="subunit">
    <text evidence="9">The olfactory cyclic nucleotide-gated channel is an heterotetramer composed of CNGA2, CNGA4 and CNGB1b subunits with 2:1:1 stoichiometry.</text>
</comment>
<comment type="subcellular location">
    <subcellularLocation>
        <location evidence="6">Cell projection</location>
        <location evidence="6">Cilium membrane</location>
        <topology evidence="4">Multi-pass membrane protein</topology>
    </subcellularLocation>
</comment>
<comment type="tissue specificity">
    <text evidence="6 7 8">Olfactory neurons. Widely expressed in brain, enriched in deep cerebellar nuclei, olfactory bulb mitral cells and cerebellar Purkinje neurons. Expressed in olfactory sensory cilia (at protein level).</text>
</comment>
<comment type="domain">
    <text evidence="1">The C-terminal coiled-coil domain mediates trimerization of CNGA subunits.</text>
</comment>
<comment type="similarity">
    <text evidence="15">Belongs to the cyclic nucleotide-gated cation channel (TC 1.A.1.5) family. CNGA2 subfamily.</text>
</comment>
<comment type="caution">
    <text evidence="15">It is uncertain whether Met-1 or Met-2 is the initiator.</text>
</comment>